<comment type="function">
    <text evidence="1">RNaseP catalyzes the removal of the 5'-leader sequence from pre-tRNA to produce the mature 5'-terminus. It can also cleave other RNA substrates such as 4.5S RNA. The protein component plays an auxiliary but essential role in vivo by binding to the 5'-leader sequence and broadening the substrate specificity of the ribozyme.</text>
</comment>
<comment type="catalytic activity">
    <reaction evidence="1">
        <text>Endonucleolytic cleavage of RNA, removing 5'-extranucleotides from tRNA precursor.</text>
        <dbReference type="EC" id="3.1.26.5"/>
    </reaction>
</comment>
<comment type="subunit">
    <text evidence="1">Consists of a catalytic RNA component (M1 or rnpB) and a protein subunit.</text>
</comment>
<comment type="similarity">
    <text evidence="1">Belongs to the RnpA family.</text>
</comment>
<protein>
    <recommendedName>
        <fullName evidence="1">Ribonuclease P protein component</fullName>
        <shortName evidence="1">RNase P protein</shortName>
        <shortName evidence="1">RNaseP protein</shortName>
        <ecNumber evidence="1">3.1.26.5</ecNumber>
    </recommendedName>
    <alternativeName>
        <fullName evidence="1">Protein C5</fullName>
    </alternativeName>
</protein>
<sequence>MSDQGFPRRQRLLTAGDYQHVFAHASFKVHGKGLLVLARPNALGYPRVGFVFSKKNVRRAVDRNRLKRLVRESFRLQSHRLPAVDIIVLARRGVDALDNATLHRQLHGMWRRLEKDVRKQSVASTPSP</sequence>
<name>RNPA_CHRSD</name>
<evidence type="ECO:0000255" key="1">
    <source>
        <dbReference type="HAMAP-Rule" id="MF_00227"/>
    </source>
</evidence>
<gene>
    <name evidence="1" type="primary">rnpA</name>
    <name type="ordered locus">Csal_3317</name>
</gene>
<organism>
    <name type="scientific">Chromohalobacter salexigens (strain ATCC BAA-138 / DSM 3043 / CIP 106854 / NCIMB 13768 / 1H11)</name>
    <dbReference type="NCBI Taxonomy" id="290398"/>
    <lineage>
        <taxon>Bacteria</taxon>
        <taxon>Pseudomonadati</taxon>
        <taxon>Pseudomonadota</taxon>
        <taxon>Gammaproteobacteria</taxon>
        <taxon>Oceanospirillales</taxon>
        <taxon>Halomonadaceae</taxon>
        <taxon>Chromohalobacter</taxon>
    </lineage>
</organism>
<feature type="chain" id="PRO_1000194623" description="Ribonuclease P protein component">
    <location>
        <begin position="1"/>
        <end position="128"/>
    </location>
</feature>
<keyword id="KW-0255">Endonuclease</keyword>
<keyword id="KW-0378">Hydrolase</keyword>
<keyword id="KW-0540">Nuclease</keyword>
<keyword id="KW-1185">Reference proteome</keyword>
<keyword id="KW-0694">RNA-binding</keyword>
<keyword id="KW-0819">tRNA processing</keyword>
<accession>Q1QS97</accession>
<reference key="1">
    <citation type="journal article" date="2011" name="Stand. Genomic Sci.">
        <title>Complete genome sequence of the halophilic and highly halotolerant Chromohalobacter salexigens type strain (1H11(T)).</title>
        <authorList>
            <person name="Copeland A."/>
            <person name="O'Connor K."/>
            <person name="Lucas S."/>
            <person name="Lapidus A."/>
            <person name="Berry K.W."/>
            <person name="Detter J.C."/>
            <person name="Del Rio T.G."/>
            <person name="Hammon N."/>
            <person name="Dalin E."/>
            <person name="Tice H."/>
            <person name="Pitluck S."/>
            <person name="Bruce D."/>
            <person name="Goodwin L."/>
            <person name="Han C."/>
            <person name="Tapia R."/>
            <person name="Saunders E."/>
            <person name="Schmutz J."/>
            <person name="Brettin T."/>
            <person name="Larimer F."/>
            <person name="Land M."/>
            <person name="Hauser L."/>
            <person name="Vargas C."/>
            <person name="Nieto J.J."/>
            <person name="Kyrpides N.C."/>
            <person name="Ivanova N."/>
            <person name="Goker M."/>
            <person name="Klenk H.P."/>
            <person name="Csonka L.N."/>
            <person name="Woyke T."/>
        </authorList>
    </citation>
    <scope>NUCLEOTIDE SEQUENCE [LARGE SCALE GENOMIC DNA]</scope>
    <source>
        <strain>ATCC BAA-138 / DSM 3043 / CIP 106854 / NCIMB 13768 / 1H11</strain>
    </source>
</reference>
<proteinExistence type="inferred from homology"/>
<dbReference type="EC" id="3.1.26.5" evidence="1"/>
<dbReference type="EMBL" id="CP000285">
    <property type="protein sequence ID" value="ABE60661.1"/>
    <property type="molecule type" value="Genomic_DNA"/>
</dbReference>
<dbReference type="RefSeq" id="WP_011508607.1">
    <property type="nucleotide sequence ID" value="NC_007963.1"/>
</dbReference>
<dbReference type="SMR" id="Q1QS97"/>
<dbReference type="STRING" id="290398.Csal_3317"/>
<dbReference type="GeneID" id="95336008"/>
<dbReference type="KEGG" id="csa:Csal_3317"/>
<dbReference type="eggNOG" id="COG0594">
    <property type="taxonomic scope" value="Bacteria"/>
</dbReference>
<dbReference type="HOGENOM" id="CLU_117179_11_0_6"/>
<dbReference type="OrthoDB" id="9796422at2"/>
<dbReference type="Proteomes" id="UP000000239">
    <property type="component" value="Chromosome"/>
</dbReference>
<dbReference type="GO" id="GO:0030677">
    <property type="term" value="C:ribonuclease P complex"/>
    <property type="evidence" value="ECO:0007669"/>
    <property type="project" value="TreeGrafter"/>
</dbReference>
<dbReference type="GO" id="GO:0042781">
    <property type="term" value="F:3'-tRNA processing endoribonuclease activity"/>
    <property type="evidence" value="ECO:0007669"/>
    <property type="project" value="TreeGrafter"/>
</dbReference>
<dbReference type="GO" id="GO:0004526">
    <property type="term" value="F:ribonuclease P activity"/>
    <property type="evidence" value="ECO:0007669"/>
    <property type="project" value="UniProtKB-UniRule"/>
</dbReference>
<dbReference type="GO" id="GO:0000049">
    <property type="term" value="F:tRNA binding"/>
    <property type="evidence" value="ECO:0007669"/>
    <property type="project" value="UniProtKB-UniRule"/>
</dbReference>
<dbReference type="GO" id="GO:0001682">
    <property type="term" value="P:tRNA 5'-leader removal"/>
    <property type="evidence" value="ECO:0007669"/>
    <property type="project" value="UniProtKB-UniRule"/>
</dbReference>
<dbReference type="Gene3D" id="3.30.230.10">
    <property type="match status" value="1"/>
</dbReference>
<dbReference type="HAMAP" id="MF_00227">
    <property type="entry name" value="RNase_P"/>
    <property type="match status" value="1"/>
</dbReference>
<dbReference type="InterPro" id="IPR020568">
    <property type="entry name" value="Ribosomal_Su5_D2-typ_SF"/>
</dbReference>
<dbReference type="InterPro" id="IPR014721">
    <property type="entry name" value="Ribsml_uS5_D2-typ_fold_subgr"/>
</dbReference>
<dbReference type="InterPro" id="IPR000100">
    <property type="entry name" value="RNase_P"/>
</dbReference>
<dbReference type="InterPro" id="IPR020539">
    <property type="entry name" value="RNase_P_CS"/>
</dbReference>
<dbReference type="NCBIfam" id="TIGR00188">
    <property type="entry name" value="rnpA"/>
    <property type="match status" value="1"/>
</dbReference>
<dbReference type="PANTHER" id="PTHR33992">
    <property type="entry name" value="RIBONUCLEASE P PROTEIN COMPONENT"/>
    <property type="match status" value="1"/>
</dbReference>
<dbReference type="PANTHER" id="PTHR33992:SF1">
    <property type="entry name" value="RIBONUCLEASE P PROTEIN COMPONENT"/>
    <property type="match status" value="1"/>
</dbReference>
<dbReference type="Pfam" id="PF00825">
    <property type="entry name" value="Ribonuclease_P"/>
    <property type="match status" value="1"/>
</dbReference>
<dbReference type="SUPFAM" id="SSF54211">
    <property type="entry name" value="Ribosomal protein S5 domain 2-like"/>
    <property type="match status" value="1"/>
</dbReference>
<dbReference type="PROSITE" id="PS00648">
    <property type="entry name" value="RIBONUCLEASE_P"/>
    <property type="match status" value="1"/>
</dbReference>